<sequence length="445" mass="49220">MKPVIALVGRPNVGKSTLFNRLTRTRDALVADLPGLTRDRHYGEGRAGDRPYLVVDTGGFEPVAKDGILHEMARQTRQAVEESDIVVFIVDGRNGLAPQDKSIADYLRKVGRPIFLVVNKAEGMKYSNVAADFYELGLGDPRAISAAHGDGVTEMINEALEVAYAGQPEESDEEKQTRGVKIAIVGRPNVGKSTLINALVGEERVIAFDMPGTTRDSIYVDFERGGKPYTLIDTAGLRRRGKVFEAIEKFSVVKTLQSISDANVVILLLDARQDISEQDAHIAGFVVEQGRALVVGVNKWDGLDPHVRERTKADLERKLKFLDFAKFHFISAAEKTGIGPLMRSVDDAYAAAMAKLPTPKLTRALIDAVEFQQPRRRGPVRPKLRYAHQGGQNPPIIVIHGNALDAITETYKRYLENRFRETFKLTGTPLRIEFRSSTNPYADKG</sequence>
<evidence type="ECO:0000255" key="1">
    <source>
        <dbReference type="HAMAP-Rule" id="MF_00195"/>
    </source>
</evidence>
<dbReference type="EMBL" id="CP001052">
    <property type="protein sequence ID" value="ACD16932.1"/>
    <property type="molecule type" value="Genomic_DNA"/>
</dbReference>
<dbReference type="RefSeq" id="WP_012433526.1">
    <property type="nucleotide sequence ID" value="NC_010681.1"/>
</dbReference>
<dbReference type="SMR" id="B2SXS6"/>
<dbReference type="STRING" id="398527.Bphyt_2537"/>
<dbReference type="GeneID" id="97307360"/>
<dbReference type="KEGG" id="bpy:Bphyt_2537"/>
<dbReference type="eggNOG" id="COG1160">
    <property type="taxonomic scope" value="Bacteria"/>
</dbReference>
<dbReference type="HOGENOM" id="CLU_016077_6_2_4"/>
<dbReference type="OrthoDB" id="9805918at2"/>
<dbReference type="Proteomes" id="UP000001739">
    <property type="component" value="Chromosome 1"/>
</dbReference>
<dbReference type="GO" id="GO:0016887">
    <property type="term" value="F:ATP hydrolysis activity"/>
    <property type="evidence" value="ECO:0007669"/>
    <property type="project" value="InterPro"/>
</dbReference>
<dbReference type="GO" id="GO:0005525">
    <property type="term" value="F:GTP binding"/>
    <property type="evidence" value="ECO:0007669"/>
    <property type="project" value="UniProtKB-UniRule"/>
</dbReference>
<dbReference type="GO" id="GO:0043022">
    <property type="term" value="F:ribosome binding"/>
    <property type="evidence" value="ECO:0007669"/>
    <property type="project" value="TreeGrafter"/>
</dbReference>
<dbReference type="GO" id="GO:0042254">
    <property type="term" value="P:ribosome biogenesis"/>
    <property type="evidence" value="ECO:0007669"/>
    <property type="project" value="UniProtKB-KW"/>
</dbReference>
<dbReference type="CDD" id="cd01894">
    <property type="entry name" value="EngA1"/>
    <property type="match status" value="1"/>
</dbReference>
<dbReference type="CDD" id="cd01895">
    <property type="entry name" value="EngA2"/>
    <property type="match status" value="1"/>
</dbReference>
<dbReference type="FunFam" id="3.30.300.20:FF:000004">
    <property type="entry name" value="GTPase Der"/>
    <property type="match status" value="1"/>
</dbReference>
<dbReference type="FunFam" id="3.40.50.300:FF:000040">
    <property type="entry name" value="GTPase Der"/>
    <property type="match status" value="1"/>
</dbReference>
<dbReference type="FunFam" id="3.40.50.300:FF:000057">
    <property type="entry name" value="GTPase Der"/>
    <property type="match status" value="1"/>
</dbReference>
<dbReference type="Gene3D" id="3.30.300.20">
    <property type="match status" value="1"/>
</dbReference>
<dbReference type="Gene3D" id="3.40.50.300">
    <property type="entry name" value="P-loop containing nucleotide triphosphate hydrolases"/>
    <property type="match status" value="2"/>
</dbReference>
<dbReference type="HAMAP" id="MF_00195">
    <property type="entry name" value="GTPase_Der"/>
    <property type="match status" value="1"/>
</dbReference>
<dbReference type="InterPro" id="IPR003593">
    <property type="entry name" value="AAA+_ATPase"/>
</dbReference>
<dbReference type="InterPro" id="IPR031166">
    <property type="entry name" value="G_ENGA"/>
</dbReference>
<dbReference type="InterPro" id="IPR006073">
    <property type="entry name" value="GTP-bd"/>
</dbReference>
<dbReference type="InterPro" id="IPR016484">
    <property type="entry name" value="GTPase_Der"/>
</dbReference>
<dbReference type="InterPro" id="IPR032859">
    <property type="entry name" value="KH_dom-like"/>
</dbReference>
<dbReference type="InterPro" id="IPR015946">
    <property type="entry name" value="KH_dom-like_a/b"/>
</dbReference>
<dbReference type="InterPro" id="IPR027417">
    <property type="entry name" value="P-loop_NTPase"/>
</dbReference>
<dbReference type="InterPro" id="IPR005225">
    <property type="entry name" value="Small_GTP-bd"/>
</dbReference>
<dbReference type="NCBIfam" id="TIGR03594">
    <property type="entry name" value="GTPase_EngA"/>
    <property type="match status" value="1"/>
</dbReference>
<dbReference type="NCBIfam" id="TIGR00231">
    <property type="entry name" value="small_GTP"/>
    <property type="match status" value="2"/>
</dbReference>
<dbReference type="PANTHER" id="PTHR43834">
    <property type="entry name" value="GTPASE DER"/>
    <property type="match status" value="1"/>
</dbReference>
<dbReference type="PANTHER" id="PTHR43834:SF6">
    <property type="entry name" value="GTPASE DER"/>
    <property type="match status" value="1"/>
</dbReference>
<dbReference type="Pfam" id="PF14714">
    <property type="entry name" value="KH_dom-like"/>
    <property type="match status" value="1"/>
</dbReference>
<dbReference type="Pfam" id="PF01926">
    <property type="entry name" value="MMR_HSR1"/>
    <property type="match status" value="2"/>
</dbReference>
<dbReference type="PIRSF" id="PIRSF006485">
    <property type="entry name" value="GTP-binding_EngA"/>
    <property type="match status" value="1"/>
</dbReference>
<dbReference type="PRINTS" id="PR00326">
    <property type="entry name" value="GTP1OBG"/>
</dbReference>
<dbReference type="SMART" id="SM00382">
    <property type="entry name" value="AAA"/>
    <property type="match status" value="2"/>
</dbReference>
<dbReference type="SUPFAM" id="SSF52540">
    <property type="entry name" value="P-loop containing nucleoside triphosphate hydrolases"/>
    <property type="match status" value="2"/>
</dbReference>
<dbReference type="PROSITE" id="PS51712">
    <property type="entry name" value="G_ENGA"/>
    <property type="match status" value="2"/>
</dbReference>
<feature type="chain" id="PRO_1000099099" description="GTPase Der">
    <location>
        <begin position="1"/>
        <end position="445"/>
    </location>
</feature>
<feature type="domain" description="EngA-type G 1">
    <location>
        <begin position="3"/>
        <end position="167"/>
    </location>
</feature>
<feature type="domain" description="EngA-type G 2">
    <location>
        <begin position="180"/>
        <end position="353"/>
    </location>
</feature>
<feature type="domain" description="KH-like" evidence="1">
    <location>
        <begin position="354"/>
        <end position="438"/>
    </location>
</feature>
<feature type="binding site" evidence="1">
    <location>
        <begin position="9"/>
        <end position="16"/>
    </location>
    <ligand>
        <name>GTP</name>
        <dbReference type="ChEBI" id="CHEBI:37565"/>
        <label>1</label>
    </ligand>
</feature>
<feature type="binding site" evidence="1">
    <location>
        <begin position="56"/>
        <end position="60"/>
    </location>
    <ligand>
        <name>GTP</name>
        <dbReference type="ChEBI" id="CHEBI:37565"/>
        <label>1</label>
    </ligand>
</feature>
<feature type="binding site" evidence="1">
    <location>
        <begin position="119"/>
        <end position="122"/>
    </location>
    <ligand>
        <name>GTP</name>
        <dbReference type="ChEBI" id="CHEBI:37565"/>
        <label>1</label>
    </ligand>
</feature>
<feature type="binding site" evidence="1">
    <location>
        <begin position="186"/>
        <end position="193"/>
    </location>
    <ligand>
        <name>GTP</name>
        <dbReference type="ChEBI" id="CHEBI:37565"/>
        <label>2</label>
    </ligand>
</feature>
<feature type="binding site" evidence="1">
    <location>
        <begin position="233"/>
        <end position="237"/>
    </location>
    <ligand>
        <name>GTP</name>
        <dbReference type="ChEBI" id="CHEBI:37565"/>
        <label>2</label>
    </ligand>
</feature>
<feature type="binding site" evidence="1">
    <location>
        <begin position="298"/>
        <end position="301"/>
    </location>
    <ligand>
        <name>GTP</name>
        <dbReference type="ChEBI" id="CHEBI:37565"/>
        <label>2</label>
    </ligand>
</feature>
<organism>
    <name type="scientific">Paraburkholderia phytofirmans (strain DSM 17436 / LMG 22146 / PsJN)</name>
    <name type="common">Burkholderia phytofirmans</name>
    <dbReference type="NCBI Taxonomy" id="398527"/>
    <lineage>
        <taxon>Bacteria</taxon>
        <taxon>Pseudomonadati</taxon>
        <taxon>Pseudomonadota</taxon>
        <taxon>Betaproteobacteria</taxon>
        <taxon>Burkholderiales</taxon>
        <taxon>Burkholderiaceae</taxon>
        <taxon>Paraburkholderia</taxon>
    </lineage>
</organism>
<comment type="function">
    <text evidence="1">GTPase that plays an essential role in the late steps of ribosome biogenesis.</text>
</comment>
<comment type="subunit">
    <text evidence="1">Associates with the 50S ribosomal subunit.</text>
</comment>
<comment type="similarity">
    <text evidence="1">Belongs to the TRAFAC class TrmE-Era-EngA-EngB-Septin-like GTPase superfamily. EngA (Der) GTPase family.</text>
</comment>
<keyword id="KW-0342">GTP-binding</keyword>
<keyword id="KW-0547">Nucleotide-binding</keyword>
<keyword id="KW-0677">Repeat</keyword>
<keyword id="KW-0690">Ribosome biogenesis</keyword>
<accession>B2SXS6</accession>
<gene>
    <name evidence="1" type="primary">der</name>
    <name type="synonym">engA</name>
    <name type="ordered locus">Bphyt_2537</name>
</gene>
<reference key="1">
    <citation type="journal article" date="2011" name="J. Bacteriol.">
        <title>Complete genome sequence of the plant growth-promoting endophyte Burkholderia phytofirmans strain PsJN.</title>
        <authorList>
            <person name="Weilharter A."/>
            <person name="Mitter B."/>
            <person name="Shin M.V."/>
            <person name="Chain P.S."/>
            <person name="Nowak J."/>
            <person name="Sessitsch A."/>
        </authorList>
    </citation>
    <scope>NUCLEOTIDE SEQUENCE [LARGE SCALE GENOMIC DNA]</scope>
    <source>
        <strain>DSM 17436 / LMG 22146 / PsJN</strain>
    </source>
</reference>
<proteinExistence type="inferred from homology"/>
<protein>
    <recommendedName>
        <fullName evidence="1">GTPase Der</fullName>
    </recommendedName>
    <alternativeName>
        <fullName evidence="1">GTP-binding protein EngA</fullName>
    </alternativeName>
</protein>
<name>DER_PARPJ</name>